<evidence type="ECO:0000250" key="1"/>
<evidence type="ECO:0000255" key="2">
    <source>
        <dbReference type="PROSITE-ProRule" id="PRU00155"/>
    </source>
</evidence>
<evidence type="ECO:0000255" key="3">
    <source>
        <dbReference type="PROSITE-ProRule" id="PRU00157"/>
    </source>
</evidence>
<evidence type="ECO:0000255" key="4">
    <source>
        <dbReference type="PROSITE-ProRule" id="PRU00190"/>
    </source>
</evidence>
<evidence type="ECO:0000269" key="5">
    <source>
    </source>
</evidence>
<evidence type="ECO:0000305" key="6"/>
<organism>
    <name type="scientific">Caenorhabditis elegans</name>
    <dbReference type="NCBI Taxonomy" id="6239"/>
    <lineage>
        <taxon>Eukaryota</taxon>
        <taxon>Metazoa</taxon>
        <taxon>Ecdysozoa</taxon>
        <taxon>Nematoda</taxon>
        <taxon>Chromadorea</taxon>
        <taxon>Rhabditida</taxon>
        <taxon>Rhabditina</taxon>
        <taxon>Rhabditomorpha</taxon>
        <taxon>Rhabditoidea</taxon>
        <taxon>Rhabditidae</taxon>
        <taxon>Peloderinae</taxon>
        <taxon>Caenorhabditis</taxon>
    </lineage>
</organism>
<keyword id="KW-0025">Alternative splicing</keyword>
<keyword id="KW-0156">Chromatin regulator</keyword>
<keyword id="KW-0158">Chromosome</keyword>
<keyword id="KW-0217">Developmental protein</keyword>
<keyword id="KW-0479">Metal-binding</keyword>
<keyword id="KW-0489">Methyltransferase</keyword>
<keyword id="KW-0539">Nucleus</keyword>
<keyword id="KW-1185">Reference proteome</keyword>
<keyword id="KW-0949">S-adenosyl-L-methionine</keyword>
<keyword id="KW-0808">Transferase</keyword>
<keyword id="KW-0862">Zinc</keyword>
<sequence>MNYEKIDSTIPGPGISETDWNDVFEGCNCEAECSSAAGCSCLINKIDNYTVDGKINKSSELLIECSDQCACILLPTSCRNRVVQCGPQKKLEIFSTCEMAKGFGVRAGEQIAAGEFVCEYAGECIGEQEVERRCREFRGDDNYTLTLKEFFGGKPVKTFVDPRLRGNIGRFLNHSCEPNCEIILARLGRMIPAAGIFAKRDIVRGEELCYDYGHSAIEGENRKLCLCKSEKCRKYLPMSATPIE</sequence>
<accession>Q95Y12</accession>
<accession>Q8MXT0</accession>
<name>SET23_CAEEL</name>
<feature type="chain" id="PRO_0000287565" description="Probable histone-lysine N-methyltransferase set-23">
    <location>
        <begin position="1"/>
        <end position="244"/>
    </location>
</feature>
<feature type="domain" description="Pre-SET" evidence="3">
    <location>
        <begin position="25"/>
        <end position="86"/>
    </location>
</feature>
<feature type="domain" description="SET" evidence="4">
    <location>
        <begin position="89"/>
        <end position="213"/>
    </location>
</feature>
<feature type="domain" description="Post-SET" evidence="2">
    <location>
        <begin position="221"/>
        <end position="237"/>
    </location>
</feature>
<feature type="binding site" evidence="1">
    <location>
        <position position="27"/>
    </location>
    <ligand>
        <name>Zn(2+)</name>
        <dbReference type="ChEBI" id="CHEBI:29105"/>
        <label>1</label>
    </ligand>
</feature>
<feature type="binding site" evidence="1">
    <location>
        <position position="27"/>
    </location>
    <ligand>
        <name>Zn(2+)</name>
        <dbReference type="ChEBI" id="CHEBI:29105"/>
        <label>2</label>
    </ligand>
</feature>
<feature type="binding site" evidence="1">
    <location>
        <position position="29"/>
    </location>
    <ligand>
        <name>Zn(2+)</name>
        <dbReference type="ChEBI" id="CHEBI:29105"/>
        <label>1</label>
    </ligand>
</feature>
<feature type="binding site" evidence="1">
    <location>
        <position position="33"/>
    </location>
    <ligand>
        <name>Zn(2+)</name>
        <dbReference type="ChEBI" id="CHEBI:29105"/>
        <label>1</label>
    </ligand>
</feature>
<feature type="binding site" evidence="1">
    <location>
        <position position="33"/>
    </location>
    <ligand>
        <name>Zn(2+)</name>
        <dbReference type="ChEBI" id="CHEBI:29105"/>
        <label>3</label>
    </ligand>
</feature>
<feature type="binding site" evidence="1">
    <location>
        <position position="39"/>
    </location>
    <ligand>
        <name>Zn(2+)</name>
        <dbReference type="ChEBI" id="CHEBI:29105"/>
        <label>1</label>
    </ligand>
</feature>
<feature type="binding site" evidence="1">
    <location>
        <position position="41"/>
    </location>
    <ligand>
        <name>Zn(2+)</name>
        <dbReference type="ChEBI" id="CHEBI:29105"/>
        <label>2</label>
    </ligand>
</feature>
<feature type="binding site" evidence="1">
    <location>
        <position position="65"/>
    </location>
    <ligand>
        <name>Zn(2+)</name>
        <dbReference type="ChEBI" id="CHEBI:29105"/>
        <label>2</label>
    </ligand>
</feature>
<feature type="binding site" evidence="1">
    <location>
        <position position="65"/>
    </location>
    <ligand>
        <name>Zn(2+)</name>
        <dbReference type="ChEBI" id="CHEBI:29105"/>
        <label>3</label>
    </ligand>
</feature>
<feature type="binding site" evidence="1">
    <location>
        <position position="69"/>
    </location>
    <ligand>
        <name>Zn(2+)</name>
        <dbReference type="ChEBI" id="CHEBI:29105"/>
        <label>2</label>
    </ligand>
</feature>
<feature type="binding site" evidence="1">
    <location>
        <position position="71"/>
    </location>
    <ligand>
        <name>Zn(2+)</name>
        <dbReference type="ChEBI" id="CHEBI:29105"/>
        <label>3</label>
    </ligand>
</feature>
<feature type="binding site" evidence="1">
    <location>
        <position position="78"/>
    </location>
    <ligand>
        <name>Zn(2+)</name>
        <dbReference type="ChEBI" id="CHEBI:29105"/>
        <label>3</label>
    </ligand>
</feature>
<feature type="binding site" evidence="1">
    <location>
        <begin position="101"/>
        <end position="103"/>
    </location>
    <ligand>
        <name>S-adenosyl-L-methionine</name>
        <dbReference type="ChEBI" id="CHEBI:59789"/>
    </ligand>
</feature>
<feature type="binding site" evidence="4">
    <location>
        <position position="141"/>
    </location>
    <ligand>
        <name>S-adenosyl-L-methionine</name>
        <dbReference type="ChEBI" id="CHEBI:59789"/>
    </ligand>
</feature>
<feature type="binding site" evidence="4">
    <location>
        <position position="143"/>
    </location>
    <ligand>
        <name>S-adenosyl-L-methionine</name>
        <dbReference type="ChEBI" id="CHEBI:59789"/>
    </ligand>
</feature>
<feature type="binding site" evidence="4">
    <location>
        <position position="170"/>
    </location>
    <ligand>
        <name>S-adenosyl-L-methionine</name>
        <dbReference type="ChEBI" id="CHEBI:59789"/>
    </ligand>
</feature>
<feature type="binding site" evidence="1">
    <location>
        <begin position="173"/>
        <end position="174"/>
    </location>
    <ligand>
        <name>S-adenosyl-L-methionine</name>
        <dbReference type="ChEBI" id="CHEBI:59789"/>
    </ligand>
</feature>
<feature type="binding site" evidence="1">
    <location>
        <position position="176"/>
    </location>
    <ligand>
        <name>Zn(2+)</name>
        <dbReference type="ChEBI" id="CHEBI:29105"/>
        <label>4</label>
    </ligand>
</feature>
<feature type="binding site" evidence="1">
    <location>
        <position position="225"/>
    </location>
    <ligand>
        <name>Zn(2+)</name>
        <dbReference type="ChEBI" id="CHEBI:29105"/>
        <label>4</label>
    </ligand>
</feature>
<feature type="binding site" evidence="1">
    <location>
        <position position="227"/>
    </location>
    <ligand>
        <name>Zn(2+)</name>
        <dbReference type="ChEBI" id="CHEBI:29105"/>
        <label>4</label>
    </ligand>
</feature>
<feature type="binding site" evidence="1">
    <location>
        <position position="232"/>
    </location>
    <ligand>
        <name>Zn(2+)</name>
        <dbReference type="ChEBI" id="CHEBI:29105"/>
        <label>4</label>
    </ligand>
</feature>
<feature type="splice variant" id="VSP_025564" description="In isoform b." evidence="6">
    <location>
        <begin position="1"/>
        <end position="85"/>
    </location>
</feature>
<feature type="splice variant" id="VSP_025565" description="In isoform b." evidence="6">
    <original>GPQKKLEIFS</original>
    <variation>MCLHTAPNFI</variation>
    <location>
        <begin position="86"/>
        <end position="95"/>
    </location>
</feature>
<protein>
    <recommendedName>
        <fullName>Probable histone-lysine N-methyltransferase set-23</fullName>
        <ecNumber>2.1.1.-</ecNumber>
    </recommendedName>
    <alternativeName>
        <fullName>SET-domain containing protein 23</fullName>
    </alternativeName>
</protein>
<gene>
    <name type="primary">set-23</name>
    <name type="ORF">Y41D4B.12</name>
</gene>
<reference key="1">
    <citation type="journal article" date="1998" name="Science">
        <title>Genome sequence of the nematode C. elegans: a platform for investigating biology.</title>
        <authorList>
            <consortium name="The C. elegans sequencing consortium"/>
        </authorList>
    </citation>
    <scope>NUCLEOTIDE SEQUENCE [LARGE SCALE GENOMIC DNA]</scope>
    <scope>ALTERNATIVE SPLICING</scope>
    <source>
        <strain>Bristol N2</strain>
    </source>
</reference>
<reference key="2">
    <citation type="journal article" date="2007" name="Development">
        <title>Two C. elegans histone methyltransferases repress lin-3 EGF transcription to inhibit vulval development.</title>
        <authorList>
            <person name="Andersen E.C."/>
            <person name="Horvitz H.R."/>
        </authorList>
    </citation>
    <scope>FUNCTION</scope>
    <scope>DISRUPTION PHENOTYPE</scope>
</reference>
<proteinExistence type="inferred from homology"/>
<comment type="function">
    <text evidence="1 5">Probable histone methyltransferase (By similarity). Required for embryonic development.</text>
</comment>
<comment type="catalytic activity">
    <reaction>
        <text>L-lysyl-[histone] + S-adenosyl-L-methionine = N(6)-methyl-L-lysyl-[histone] + S-adenosyl-L-homocysteine + H(+)</text>
        <dbReference type="Rhea" id="RHEA:10024"/>
        <dbReference type="Rhea" id="RHEA-COMP:9845"/>
        <dbReference type="Rhea" id="RHEA-COMP:9846"/>
        <dbReference type="ChEBI" id="CHEBI:15378"/>
        <dbReference type="ChEBI" id="CHEBI:29969"/>
        <dbReference type="ChEBI" id="CHEBI:57856"/>
        <dbReference type="ChEBI" id="CHEBI:59789"/>
        <dbReference type="ChEBI" id="CHEBI:61929"/>
    </reaction>
</comment>
<comment type="subcellular location">
    <subcellularLocation>
        <location evidence="1">Nucleus</location>
    </subcellularLocation>
    <subcellularLocation>
        <location evidence="1">Chromosome</location>
    </subcellularLocation>
</comment>
<comment type="alternative products">
    <event type="alternative splicing"/>
    <isoform>
        <id>Q95Y12-1</id>
        <name>a</name>
        <sequence type="displayed"/>
    </isoform>
    <isoform>
        <id>Q95Y12-2</id>
        <name>b</name>
        <sequence type="described" ref="VSP_025564 VSP_025565"/>
    </isoform>
</comment>
<comment type="domain">
    <text evidence="1">In the pre-SET domain, Cys residues bind 3 zinc ions that are arranged in a triangular cluster; some of these Cys residues contribute to the binding of two zinc ions within the cluster.</text>
</comment>
<comment type="disruption phenotype">
    <text evidence="5">Embryonic lethal.</text>
</comment>
<comment type="similarity">
    <text evidence="4">Belongs to the class V-like SAM-binding methyltransferase superfamily. Histone-lysine methyltransferase family. Suvar3-9 subfamily.</text>
</comment>
<dbReference type="EC" id="2.1.1.-"/>
<dbReference type="EMBL" id="FO080782">
    <property type="protein sequence ID" value="CCD66712.1"/>
    <property type="molecule type" value="Genomic_DNA"/>
</dbReference>
<dbReference type="EMBL" id="FO080782">
    <property type="protein sequence ID" value="CCD66713.1"/>
    <property type="molecule type" value="Genomic_DNA"/>
</dbReference>
<dbReference type="RefSeq" id="NP_741320.1">
    <molecule id="Q95Y12-1"/>
    <property type="nucleotide sequence ID" value="NM_171270.2"/>
</dbReference>
<dbReference type="RefSeq" id="NP_741321.1">
    <molecule id="Q95Y12-2"/>
    <property type="nucleotide sequence ID" value="NM_171271.7"/>
</dbReference>
<dbReference type="SMR" id="Q95Y12"/>
<dbReference type="BioGRID" id="42125">
    <property type="interactions" value="1"/>
</dbReference>
<dbReference type="FunCoup" id="Q95Y12">
    <property type="interactions" value="1160"/>
</dbReference>
<dbReference type="IntAct" id="Q95Y12">
    <property type="interactions" value="1"/>
</dbReference>
<dbReference type="STRING" id="6239.Y41D4B.12a.1"/>
<dbReference type="PaxDb" id="6239-Y41D4B.12a"/>
<dbReference type="EnsemblMetazoa" id="Y41D4B.12a.1">
    <molecule id="Q95Y12-1"/>
    <property type="protein sequence ID" value="Y41D4B.12a.1"/>
    <property type="gene ID" value="WBGene00021515"/>
</dbReference>
<dbReference type="EnsemblMetazoa" id="Y41D4B.12a.2">
    <molecule id="Q95Y12-1"/>
    <property type="protein sequence ID" value="Y41D4B.12a.2"/>
    <property type="gene ID" value="WBGene00021515"/>
</dbReference>
<dbReference type="EnsemblMetazoa" id="Y41D4B.12b.1">
    <molecule id="Q95Y12-2"/>
    <property type="protein sequence ID" value="Y41D4B.12b.1"/>
    <property type="gene ID" value="WBGene00021515"/>
</dbReference>
<dbReference type="GeneID" id="176969"/>
<dbReference type="KEGG" id="cel:CELE_Y41D4B.12"/>
<dbReference type="AGR" id="WB:WBGene00021515"/>
<dbReference type="CTD" id="176969"/>
<dbReference type="WormBase" id="Y41D4B.12a">
    <molecule id="Q95Y12-1"/>
    <property type="protein sequence ID" value="CE27623"/>
    <property type="gene ID" value="WBGene00021515"/>
    <property type="gene designation" value="set-23"/>
</dbReference>
<dbReference type="WormBase" id="Y41D4B.12b">
    <molecule id="Q95Y12-2"/>
    <property type="protein sequence ID" value="CE31647"/>
    <property type="gene ID" value="WBGene00021515"/>
    <property type="gene designation" value="set-23"/>
</dbReference>
<dbReference type="eggNOG" id="KOG1082">
    <property type="taxonomic scope" value="Eukaryota"/>
</dbReference>
<dbReference type="InParanoid" id="Q95Y12"/>
<dbReference type="OMA" id="VDSMVPK"/>
<dbReference type="OrthoDB" id="616263at2759"/>
<dbReference type="PhylomeDB" id="Q95Y12"/>
<dbReference type="PRO" id="PR:Q95Y12"/>
<dbReference type="Proteomes" id="UP000001940">
    <property type="component" value="Chromosome IV"/>
</dbReference>
<dbReference type="Bgee" id="WBGene00021515">
    <property type="expression patterns" value="Expressed in germ line (C elegans) and 5 other cell types or tissues"/>
</dbReference>
<dbReference type="GO" id="GO:0005694">
    <property type="term" value="C:chromosome"/>
    <property type="evidence" value="ECO:0007669"/>
    <property type="project" value="UniProtKB-SubCell"/>
</dbReference>
<dbReference type="GO" id="GO:0005634">
    <property type="term" value="C:nucleus"/>
    <property type="evidence" value="ECO:0007669"/>
    <property type="project" value="UniProtKB-SubCell"/>
</dbReference>
<dbReference type="GO" id="GO:0003690">
    <property type="term" value="F:double-stranded DNA binding"/>
    <property type="evidence" value="ECO:0000318"/>
    <property type="project" value="GO_Central"/>
</dbReference>
<dbReference type="GO" id="GO:0042054">
    <property type="term" value="F:histone methyltransferase activity"/>
    <property type="evidence" value="ECO:0000318"/>
    <property type="project" value="GO_Central"/>
</dbReference>
<dbReference type="GO" id="GO:0008270">
    <property type="term" value="F:zinc ion binding"/>
    <property type="evidence" value="ECO:0007669"/>
    <property type="project" value="InterPro"/>
</dbReference>
<dbReference type="GO" id="GO:0032259">
    <property type="term" value="P:methylation"/>
    <property type="evidence" value="ECO:0007669"/>
    <property type="project" value="UniProtKB-KW"/>
</dbReference>
<dbReference type="Gene3D" id="2.170.270.10">
    <property type="entry name" value="SET domain"/>
    <property type="match status" value="1"/>
</dbReference>
<dbReference type="InterPro" id="IPR050973">
    <property type="entry name" value="H3K9_Histone-Lys_N-MTase"/>
</dbReference>
<dbReference type="InterPro" id="IPR003616">
    <property type="entry name" value="Post-SET_dom"/>
</dbReference>
<dbReference type="InterPro" id="IPR007728">
    <property type="entry name" value="Pre-SET_dom"/>
</dbReference>
<dbReference type="InterPro" id="IPR001214">
    <property type="entry name" value="SET_dom"/>
</dbReference>
<dbReference type="InterPro" id="IPR046341">
    <property type="entry name" value="SET_dom_sf"/>
</dbReference>
<dbReference type="PANTHER" id="PTHR46223:SF3">
    <property type="entry name" value="HISTONE-LYSINE N-METHYLTRANSFERASE SET-23"/>
    <property type="match status" value="1"/>
</dbReference>
<dbReference type="PANTHER" id="PTHR46223">
    <property type="entry name" value="HISTONE-LYSINE N-METHYLTRANSFERASE SUV39H"/>
    <property type="match status" value="1"/>
</dbReference>
<dbReference type="Pfam" id="PF00856">
    <property type="entry name" value="SET"/>
    <property type="match status" value="1"/>
</dbReference>
<dbReference type="SMART" id="SM00317">
    <property type="entry name" value="SET"/>
    <property type="match status" value="1"/>
</dbReference>
<dbReference type="SUPFAM" id="SSF82199">
    <property type="entry name" value="SET domain"/>
    <property type="match status" value="1"/>
</dbReference>
<dbReference type="PROSITE" id="PS50868">
    <property type="entry name" value="POST_SET"/>
    <property type="match status" value="1"/>
</dbReference>
<dbReference type="PROSITE" id="PS50867">
    <property type="entry name" value="PRE_SET"/>
    <property type="match status" value="1"/>
</dbReference>
<dbReference type="PROSITE" id="PS50280">
    <property type="entry name" value="SET"/>
    <property type="match status" value="1"/>
</dbReference>